<feature type="initiator methionine" description="Removed" evidence="1">
    <location>
        <position position="1"/>
    </location>
</feature>
<feature type="chain" id="PRO_0000275979" description="Photosystem I iron-sulfur center">
    <location>
        <begin position="2"/>
        <end position="81"/>
    </location>
</feature>
<feature type="domain" description="4Fe-4S ferredoxin-type 1" evidence="2">
    <location>
        <begin position="2"/>
        <end position="31"/>
    </location>
</feature>
<feature type="domain" description="4Fe-4S ferredoxin-type 2" evidence="2">
    <location>
        <begin position="39"/>
        <end position="68"/>
    </location>
</feature>
<feature type="binding site" evidence="2">
    <location>
        <position position="11"/>
    </location>
    <ligand>
        <name>[4Fe-4S] cluster</name>
        <dbReference type="ChEBI" id="CHEBI:49883"/>
        <label>1</label>
    </ligand>
</feature>
<feature type="binding site" evidence="2">
    <location>
        <position position="14"/>
    </location>
    <ligand>
        <name>[4Fe-4S] cluster</name>
        <dbReference type="ChEBI" id="CHEBI:49883"/>
        <label>1</label>
    </ligand>
</feature>
<feature type="binding site" evidence="2">
    <location>
        <position position="17"/>
    </location>
    <ligand>
        <name>[4Fe-4S] cluster</name>
        <dbReference type="ChEBI" id="CHEBI:49883"/>
        <label>1</label>
    </ligand>
</feature>
<feature type="binding site" evidence="2">
    <location>
        <position position="21"/>
    </location>
    <ligand>
        <name>[4Fe-4S] cluster</name>
        <dbReference type="ChEBI" id="CHEBI:49883"/>
        <label>2</label>
    </ligand>
</feature>
<feature type="binding site" evidence="2">
    <location>
        <position position="48"/>
    </location>
    <ligand>
        <name>[4Fe-4S] cluster</name>
        <dbReference type="ChEBI" id="CHEBI:49883"/>
        <label>2</label>
    </ligand>
</feature>
<feature type="binding site" evidence="2">
    <location>
        <position position="51"/>
    </location>
    <ligand>
        <name>[4Fe-4S] cluster</name>
        <dbReference type="ChEBI" id="CHEBI:49883"/>
        <label>2</label>
    </ligand>
</feature>
<feature type="binding site" evidence="2">
    <location>
        <position position="54"/>
    </location>
    <ligand>
        <name>[4Fe-4S] cluster</name>
        <dbReference type="ChEBI" id="CHEBI:49883"/>
        <label>2</label>
    </ligand>
</feature>
<feature type="binding site" evidence="2">
    <location>
        <position position="58"/>
    </location>
    <ligand>
        <name>[4Fe-4S] cluster</name>
        <dbReference type="ChEBI" id="CHEBI:49883"/>
        <label>1</label>
    </ligand>
</feature>
<comment type="function">
    <text evidence="2">Apoprotein for the two 4Fe-4S centers FA and FB of photosystem I (PSI); essential for photochemical activity. FB is the terminal electron acceptor of PSI, donating electrons to ferredoxin. The C-terminus interacts with PsaA/B/D and helps assemble the protein into the PSI complex. Required for binding of PsaD and PsaE to PSI. PSI is a plastocyanin-ferredoxin oxidoreductase, converting photonic excitation into a charge separation, which transfers an electron from the donor P700 chlorophyll pair to the spectroscopically characterized acceptors A0, A1, FX, FA and FB in turn.</text>
</comment>
<comment type="catalytic activity">
    <reaction evidence="2">
        <text>reduced [plastocyanin] + hnu + oxidized [2Fe-2S]-[ferredoxin] = oxidized [plastocyanin] + reduced [2Fe-2S]-[ferredoxin]</text>
        <dbReference type="Rhea" id="RHEA:30407"/>
        <dbReference type="Rhea" id="RHEA-COMP:10000"/>
        <dbReference type="Rhea" id="RHEA-COMP:10001"/>
        <dbReference type="Rhea" id="RHEA-COMP:10039"/>
        <dbReference type="Rhea" id="RHEA-COMP:10040"/>
        <dbReference type="ChEBI" id="CHEBI:29036"/>
        <dbReference type="ChEBI" id="CHEBI:30212"/>
        <dbReference type="ChEBI" id="CHEBI:33737"/>
        <dbReference type="ChEBI" id="CHEBI:33738"/>
        <dbReference type="ChEBI" id="CHEBI:49552"/>
        <dbReference type="EC" id="1.97.1.12"/>
    </reaction>
</comment>
<comment type="cofactor">
    <cofactor evidence="2">
        <name>[4Fe-4S] cluster</name>
        <dbReference type="ChEBI" id="CHEBI:49883"/>
    </cofactor>
    <text evidence="2">Binds 2 [4Fe-4S] clusters. Cluster 2 is most probably the spectroscopically characterized electron acceptor FA and cluster 1 is most probably FB.</text>
</comment>
<comment type="subunit">
    <text evidence="2">The eukaryotic PSI reaction center is composed of at least 11 subunits.</text>
</comment>
<comment type="subcellular location">
    <subcellularLocation>
        <location evidence="2">Plastid</location>
        <location evidence="2">Chloroplast thylakoid membrane</location>
        <topology evidence="2">Peripheral membrane protein</topology>
        <orientation evidence="2">Stromal side</orientation>
    </subcellularLocation>
</comment>
<name>PSAC_DRIGR</name>
<protein>
    <recommendedName>
        <fullName evidence="2">Photosystem I iron-sulfur center</fullName>
        <ecNumber evidence="2">1.97.1.12</ecNumber>
    </recommendedName>
    <alternativeName>
        <fullName evidence="2">9 kDa polypeptide</fullName>
    </alternativeName>
    <alternativeName>
        <fullName evidence="2">PSI-C</fullName>
    </alternativeName>
    <alternativeName>
        <fullName evidence="2">Photosystem I subunit VII</fullName>
    </alternativeName>
    <alternativeName>
        <fullName evidence="2">PsaC</fullName>
    </alternativeName>
</protein>
<accession>Q06GU5</accession>
<sequence length="81" mass="8965">MSHSVKIYDTCIGCTQCVRACPTDVLEMIPWDGCKAKQIAPAPRTEDCVGCKRCESACPTDFLSVRVYLCHETTRSMGLAY</sequence>
<gene>
    <name evidence="2" type="primary">psaC</name>
</gene>
<dbReference type="EC" id="1.97.1.12" evidence="2"/>
<dbReference type="EMBL" id="DQ887676">
    <property type="protein sequence ID" value="ABH88349.1"/>
    <property type="molecule type" value="Genomic_DNA"/>
</dbReference>
<dbReference type="RefSeq" id="YP_784438.1">
    <property type="nucleotide sequence ID" value="NC_008456.1"/>
</dbReference>
<dbReference type="SMR" id="Q06GU5"/>
<dbReference type="GeneID" id="4363559"/>
<dbReference type="GO" id="GO:0009535">
    <property type="term" value="C:chloroplast thylakoid membrane"/>
    <property type="evidence" value="ECO:0007669"/>
    <property type="project" value="UniProtKB-SubCell"/>
</dbReference>
<dbReference type="GO" id="GO:0009522">
    <property type="term" value="C:photosystem I"/>
    <property type="evidence" value="ECO:0007669"/>
    <property type="project" value="UniProtKB-KW"/>
</dbReference>
<dbReference type="GO" id="GO:0051539">
    <property type="term" value="F:4 iron, 4 sulfur cluster binding"/>
    <property type="evidence" value="ECO:0007669"/>
    <property type="project" value="UniProtKB-KW"/>
</dbReference>
<dbReference type="GO" id="GO:0009055">
    <property type="term" value="F:electron transfer activity"/>
    <property type="evidence" value="ECO:0007669"/>
    <property type="project" value="UniProtKB-UniRule"/>
</dbReference>
<dbReference type="GO" id="GO:0046872">
    <property type="term" value="F:metal ion binding"/>
    <property type="evidence" value="ECO:0007669"/>
    <property type="project" value="UniProtKB-KW"/>
</dbReference>
<dbReference type="GO" id="GO:0016491">
    <property type="term" value="F:oxidoreductase activity"/>
    <property type="evidence" value="ECO:0007669"/>
    <property type="project" value="UniProtKB-KW"/>
</dbReference>
<dbReference type="GO" id="GO:0009773">
    <property type="term" value="P:photosynthetic electron transport in photosystem I"/>
    <property type="evidence" value="ECO:0007669"/>
    <property type="project" value="InterPro"/>
</dbReference>
<dbReference type="FunFam" id="3.30.70.20:FF:000001">
    <property type="entry name" value="Photosystem I iron-sulfur center"/>
    <property type="match status" value="1"/>
</dbReference>
<dbReference type="Gene3D" id="3.30.70.20">
    <property type="match status" value="1"/>
</dbReference>
<dbReference type="HAMAP" id="MF_01303">
    <property type="entry name" value="PSI_PsaC"/>
    <property type="match status" value="1"/>
</dbReference>
<dbReference type="InterPro" id="IPR017896">
    <property type="entry name" value="4Fe4S_Fe-S-bd"/>
</dbReference>
<dbReference type="InterPro" id="IPR017900">
    <property type="entry name" value="4Fe4S_Fe_S_CS"/>
</dbReference>
<dbReference type="InterPro" id="IPR050157">
    <property type="entry name" value="PSI_iron-sulfur_center"/>
</dbReference>
<dbReference type="InterPro" id="IPR017491">
    <property type="entry name" value="PSI_PsaC"/>
</dbReference>
<dbReference type="NCBIfam" id="TIGR03048">
    <property type="entry name" value="PS_I_psaC"/>
    <property type="match status" value="1"/>
</dbReference>
<dbReference type="PANTHER" id="PTHR24960:SF79">
    <property type="entry name" value="PHOTOSYSTEM I IRON-SULFUR CENTER"/>
    <property type="match status" value="1"/>
</dbReference>
<dbReference type="PANTHER" id="PTHR24960">
    <property type="entry name" value="PHOTOSYSTEM I IRON-SULFUR CENTER-RELATED"/>
    <property type="match status" value="1"/>
</dbReference>
<dbReference type="Pfam" id="PF14697">
    <property type="entry name" value="Fer4_21"/>
    <property type="match status" value="1"/>
</dbReference>
<dbReference type="SUPFAM" id="SSF54862">
    <property type="entry name" value="4Fe-4S ferredoxins"/>
    <property type="match status" value="1"/>
</dbReference>
<dbReference type="PROSITE" id="PS00198">
    <property type="entry name" value="4FE4S_FER_1"/>
    <property type="match status" value="2"/>
</dbReference>
<dbReference type="PROSITE" id="PS51379">
    <property type="entry name" value="4FE4S_FER_2"/>
    <property type="match status" value="2"/>
</dbReference>
<evidence type="ECO:0000250" key="1"/>
<evidence type="ECO:0000255" key="2">
    <source>
        <dbReference type="HAMAP-Rule" id="MF_01303"/>
    </source>
</evidence>
<proteinExistence type="inferred from homology"/>
<geneLocation type="chloroplast"/>
<organism>
    <name type="scientific">Drimys granadensis</name>
    <dbReference type="NCBI Taxonomy" id="224735"/>
    <lineage>
        <taxon>Eukaryota</taxon>
        <taxon>Viridiplantae</taxon>
        <taxon>Streptophyta</taxon>
        <taxon>Embryophyta</taxon>
        <taxon>Tracheophyta</taxon>
        <taxon>Spermatophyta</taxon>
        <taxon>Magnoliopsida</taxon>
        <taxon>Magnoliidae</taxon>
        <taxon>Canellales</taxon>
        <taxon>Winteraceae</taxon>
        <taxon>Drimys</taxon>
    </lineage>
</organism>
<keyword id="KW-0004">4Fe-4S</keyword>
<keyword id="KW-0150">Chloroplast</keyword>
<keyword id="KW-0249">Electron transport</keyword>
<keyword id="KW-0408">Iron</keyword>
<keyword id="KW-0411">Iron-sulfur</keyword>
<keyword id="KW-0472">Membrane</keyword>
<keyword id="KW-0479">Metal-binding</keyword>
<keyword id="KW-0560">Oxidoreductase</keyword>
<keyword id="KW-0602">Photosynthesis</keyword>
<keyword id="KW-0603">Photosystem I</keyword>
<keyword id="KW-0934">Plastid</keyword>
<keyword id="KW-0677">Repeat</keyword>
<keyword id="KW-0793">Thylakoid</keyword>
<keyword id="KW-0813">Transport</keyword>
<reference key="1">
    <citation type="journal article" date="2006" name="BMC Evol. Biol.">
        <title>Complete plastid genome sequences of Drimys, Liriodendron, and Piper: implications for the phylogenetic relationships of magnoliids.</title>
        <authorList>
            <person name="Cai Z."/>
            <person name="Penaflor C."/>
            <person name="Kuehl J.V."/>
            <person name="Leebens-Mack J."/>
            <person name="Carlson J.E."/>
            <person name="dePamphilis C.W."/>
            <person name="Boore J.L."/>
            <person name="Jansen R.K."/>
        </authorList>
    </citation>
    <scope>NUCLEOTIDE SEQUENCE [LARGE SCALE GENOMIC DNA]</scope>
</reference>